<organism>
    <name type="scientific">Salmonella choleraesuis (strain SC-B67)</name>
    <dbReference type="NCBI Taxonomy" id="321314"/>
    <lineage>
        <taxon>Bacteria</taxon>
        <taxon>Pseudomonadati</taxon>
        <taxon>Pseudomonadota</taxon>
        <taxon>Gammaproteobacteria</taxon>
        <taxon>Enterobacterales</taxon>
        <taxon>Enterobacteriaceae</taxon>
        <taxon>Salmonella</taxon>
    </lineage>
</organism>
<name>RSMA_SALCH</name>
<keyword id="KW-0963">Cytoplasm</keyword>
<keyword id="KW-0489">Methyltransferase</keyword>
<keyword id="KW-0694">RNA-binding</keyword>
<keyword id="KW-0698">rRNA processing</keyword>
<keyword id="KW-0949">S-adenosyl-L-methionine</keyword>
<keyword id="KW-0808">Transferase</keyword>
<dbReference type="EC" id="2.1.1.182" evidence="1"/>
<dbReference type="EMBL" id="AE017220">
    <property type="protein sequence ID" value="AAX63991.1"/>
    <property type="molecule type" value="Genomic_DNA"/>
</dbReference>
<dbReference type="RefSeq" id="WP_001538941.1">
    <property type="nucleotide sequence ID" value="NC_006905.1"/>
</dbReference>
<dbReference type="SMR" id="Q57TH0"/>
<dbReference type="KEGG" id="sec:SCH_0085"/>
<dbReference type="HOGENOM" id="CLU_041220_0_1_6"/>
<dbReference type="Proteomes" id="UP000000538">
    <property type="component" value="Chromosome"/>
</dbReference>
<dbReference type="GO" id="GO:0005829">
    <property type="term" value="C:cytosol"/>
    <property type="evidence" value="ECO:0007669"/>
    <property type="project" value="TreeGrafter"/>
</dbReference>
<dbReference type="GO" id="GO:0052908">
    <property type="term" value="F:16S rRNA (adenine(1518)-N(6)/adenine(1519)-N(6))-dimethyltransferase activity"/>
    <property type="evidence" value="ECO:0007669"/>
    <property type="project" value="UniProtKB-EC"/>
</dbReference>
<dbReference type="GO" id="GO:0003723">
    <property type="term" value="F:RNA binding"/>
    <property type="evidence" value="ECO:0007669"/>
    <property type="project" value="UniProtKB-KW"/>
</dbReference>
<dbReference type="FunFam" id="1.10.8.100:FF:000001">
    <property type="entry name" value="Ribosomal RNA small subunit methyltransferase A"/>
    <property type="match status" value="1"/>
</dbReference>
<dbReference type="FunFam" id="3.40.50.150:FF:000006">
    <property type="entry name" value="Ribosomal RNA small subunit methyltransferase A"/>
    <property type="match status" value="1"/>
</dbReference>
<dbReference type="Gene3D" id="1.10.8.100">
    <property type="entry name" value="Ribosomal RNA adenine dimethylase-like, domain 2"/>
    <property type="match status" value="1"/>
</dbReference>
<dbReference type="Gene3D" id="3.40.50.150">
    <property type="entry name" value="Vaccinia Virus protein VP39"/>
    <property type="match status" value="1"/>
</dbReference>
<dbReference type="HAMAP" id="MF_00607">
    <property type="entry name" value="16SrRNA_methyltr_A"/>
    <property type="match status" value="1"/>
</dbReference>
<dbReference type="InterPro" id="IPR001737">
    <property type="entry name" value="KsgA/Erm"/>
</dbReference>
<dbReference type="InterPro" id="IPR023165">
    <property type="entry name" value="rRNA_Ade_diMease-like_C"/>
</dbReference>
<dbReference type="InterPro" id="IPR020596">
    <property type="entry name" value="rRNA_Ade_Mease_Trfase_CS"/>
</dbReference>
<dbReference type="InterPro" id="IPR020598">
    <property type="entry name" value="rRNA_Ade_methylase_Trfase_N"/>
</dbReference>
<dbReference type="InterPro" id="IPR011530">
    <property type="entry name" value="rRNA_adenine_dimethylase"/>
</dbReference>
<dbReference type="InterPro" id="IPR029063">
    <property type="entry name" value="SAM-dependent_MTases_sf"/>
</dbReference>
<dbReference type="NCBIfam" id="TIGR00755">
    <property type="entry name" value="ksgA"/>
    <property type="match status" value="1"/>
</dbReference>
<dbReference type="PANTHER" id="PTHR11727">
    <property type="entry name" value="DIMETHYLADENOSINE TRANSFERASE"/>
    <property type="match status" value="1"/>
</dbReference>
<dbReference type="PANTHER" id="PTHR11727:SF7">
    <property type="entry name" value="DIMETHYLADENOSINE TRANSFERASE-RELATED"/>
    <property type="match status" value="1"/>
</dbReference>
<dbReference type="Pfam" id="PF00398">
    <property type="entry name" value="RrnaAD"/>
    <property type="match status" value="1"/>
</dbReference>
<dbReference type="SMART" id="SM00650">
    <property type="entry name" value="rADc"/>
    <property type="match status" value="1"/>
</dbReference>
<dbReference type="SUPFAM" id="SSF53335">
    <property type="entry name" value="S-adenosyl-L-methionine-dependent methyltransferases"/>
    <property type="match status" value="1"/>
</dbReference>
<dbReference type="PROSITE" id="PS01131">
    <property type="entry name" value="RRNA_A_DIMETH"/>
    <property type="match status" value="1"/>
</dbReference>
<dbReference type="PROSITE" id="PS51689">
    <property type="entry name" value="SAM_RNA_A_N6_MT"/>
    <property type="match status" value="1"/>
</dbReference>
<comment type="function">
    <text evidence="1">Specifically dimethylates two adjacent adenosines (A1518 and A1519) in the loop of a conserved hairpin near the 3'-end of 16S rRNA in the 30S particle. May play a critical role in biogenesis of 30S subunits.</text>
</comment>
<comment type="catalytic activity">
    <reaction evidence="1">
        <text>adenosine(1518)/adenosine(1519) in 16S rRNA + 4 S-adenosyl-L-methionine = N(6)-dimethyladenosine(1518)/N(6)-dimethyladenosine(1519) in 16S rRNA + 4 S-adenosyl-L-homocysteine + 4 H(+)</text>
        <dbReference type="Rhea" id="RHEA:19609"/>
        <dbReference type="Rhea" id="RHEA-COMP:10232"/>
        <dbReference type="Rhea" id="RHEA-COMP:10233"/>
        <dbReference type="ChEBI" id="CHEBI:15378"/>
        <dbReference type="ChEBI" id="CHEBI:57856"/>
        <dbReference type="ChEBI" id="CHEBI:59789"/>
        <dbReference type="ChEBI" id="CHEBI:74411"/>
        <dbReference type="ChEBI" id="CHEBI:74493"/>
        <dbReference type="EC" id="2.1.1.182"/>
    </reaction>
</comment>
<comment type="subcellular location">
    <subcellularLocation>
        <location evidence="1">Cytoplasm</location>
    </subcellularLocation>
</comment>
<comment type="similarity">
    <text evidence="1">Belongs to the class I-like SAM-binding methyltransferase superfamily. rRNA adenine N(6)-methyltransferase family. RsmA subfamily.</text>
</comment>
<evidence type="ECO:0000255" key="1">
    <source>
        <dbReference type="HAMAP-Rule" id="MF_00607"/>
    </source>
</evidence>
<proteinExistence type="inferred from homology"/>
<feature type="chain" id="PRO_0000257343" description="Ribosomal RNA small subunit methyltransferase A">
    <location>
        <begin position="1"/>
        <end position="273"/>
    </location>
</feature>
<feature type="binding site" evidence="1">
    <location>
        <position position="18"/>
    </location>
    <ligand>
        <name>S-adenosyl-L-methionine</name>
        <dbReference type="ChEBI" id="CHEBI:59789"/>
    </ligand>
</feature>
<feature type="binding site" evidence="1">
    <location>
        <position position="20"/>
    </location>
    <ligand>
        <name>S-adenosyl-L-methionine</name>
        <dbReference type="ChEBI" id="CHEBI:59789"/>
    </ligand>
</feature>
<feature type="binding site" evidence="1">
    <location>
        <position position="45"/>
    </location>
    <ligand>
        <name>S-adenosyl-L-methionine</name>
        <dbReference type="ChEBI" id="CHEBI:59789"/>
    </ligand>
</feature>
<feature type="binding site" evidence="1">
    <location>
        <position position="66"/>
    </location>
    <ligand>
        <name>S-adenosyl-L-methionine</name>
        <dbReference type="ChEBI" id="CHEBI:59789"/>
    </ligand>
</feature>
<feature type="binding site" evidence="1">
    <location>
        <position position="91"/>
    </location>
    <ligand>
        <name>S-adenosyl-L-methionine</name>
        <dbReference type="ChEBI" id="CHEBI:59789"/>
    </ligand>
</feature>
<feature type="binding site" evidence="1">
    <location>
        <position position="113"/>
    </location>
    <ligand>
        <name>S-adenosyl-L-methionine</name>
        <dbReference type="ChEBI" id="CHEBI:59789"/>
    </ligand>
</feature>
<accession>Q57TH0</accession>
<reference key="1">
    <citation type="journal article" date="2005" name="Nucleic Acids Res.">
        <title>The genome sequence of Salmonella enterica serovar Choleraesuis, a highly invasive and resistant zoonotic pathogen.</title>
        <authorList>
            <person name="Chiu C.-H."/>
            <person name="Tang P."/>
            <person name="Chu C."/>
            <person name="Hu S."/>
            <person name="Bao Q."/>
            <person name="Yu J."/>
            <person name="Chou Y.-Y."/>
            <person name="Wang H.-S."/>
            <person name="Lee Y.-S."/>
        </authorList>
    </citation>
    <scope>NUCLEOTIDE SEQUENCE [LARGE SCALE GENOMIC DNA]</scope>
    <source>
        <strain>SC-B67</strain>
    </source>
</reference>
<gene>
    <name evidence="1" type="primary">rsmA</name>
    <name evidence="1" type="synonym">ksgA</name>
    <name type="ordered locus">SCH_0085</name>
</gene>
<protein>
    <recommendedName>
        <fullName evidence="1">Ribosomal RNA small subunit methyltransferase A</fullName>
        <ecNumber evidence="1">2.1.1.182</ecNumber>
    </recommendedName>
    <alternativeName>
        <fullName evidence="1">16S rRNA (adenine(1518)-N(6)/adenine(1519)-N(6))-dimethyltransferase</fullName>
    </alternativeName>
    <alternativeName>
        <fullName evidence="1">16S rRNA dimethyladenosine transferase</fullName>
    </alternativeName>
    <alternativeName>
        <fullName evidence="1">16S rRNA dimethylase</fullName>
    </alternativeName>
    <alternativeName>
        <fullName evidence="1">S-adenosylmethionine-6-N', N'-adenosyl(rRNA) dimethyltransferase</fullName>
    </alternativeName>
</protein>
<sequence>MNNRVHQGHLARKRFGQNFLNDRFVIDSIVSAINPQKGQAMVEIGPGLAALTEPVGERLDKLTVIELDRDLAARLQTHPFLGSKLTIYQQDAMTMNFGELSAQLGQPLRVFGNLPYNISTPLMFHLFSYTDAIADMHFMLQKEVVNRLVAGPNSKAYGRLSVMAQYYCQVIPVLEVPPSAFTPPPKVDSAVVRLVPHATMPYPVKDIRVLSRITTEAFNQRRKTIRNSLGNLFSVETLTEMGIDPAMRAENISVAQYCQMANYLSENAPLKES</sequence>